<evidence type="ECO:0000255" key="1">
    <source>
        <dbReference type="HAMAP-Rule" id="MF_00382"/>
    </source>
</evidence>
<evidence type="ECO:0000305" key="2"/>
<comment type="function">
    <text evidence="1">Binds directly to 23S ribosomal RNA and is necessary for the in vitro assembly process of the 50S ribosomal subunit. It is not involved in the protein synthesizing functions of that subunit.</text>
</comment>
<comment type="similarity">
    <text evidence="1">Belongs to the bacterial ribosomal protein bL20 family.</text>
</comment>
<dbReference type="EMBL" id="CP000802">
    <property type="protein sequence ID" value="ABV06113.1"/>
    <property type="molecule type" value="Genomic_DNA"/>
</dbReference>
<dbReference type="RefSeq" id="WP_000124850.1">
    <property type="nucleotide sequence ID" value="NC_009800.1"/>
</dbReference>
<dbReference type="SMR" id="A8A0Q9"/>
<dbReference type="GeneID" id="98388757"/>
<dbReference type="KEGG" id="ecx:EcHS_A1797"/>
<dbReference type="HOGENOM" id="CLU_123265_0_1_6"/>
<dbReference type="GO" id="GO:1990904">
    <property type="term" value="C:ribonucleoprotein complex"/>
    <property type="evidence" value="ECO:0007669"/>
    <property type="project" value="UniProtKB-KW"/>
</dbReference>
<dbReference type="GO" id="GO:0005840">
    <property type="term" value="C:ribosome"/>
    <property type="evidence" value="ECO:0007669"/>
    <property type="project" value="UniProtKB-KW"/>
</dbReference>
<dbReference type="GO" id="GO:0019843">
    <property type="term" value="F:rRNA binding"/>
    <property type="evidence" value="ECO:0007669"/>
    <property type="project" value="UniProtKB-UniRule"/>
</dbReference>
<dbReference type="GO" id="GO:0003735">
    <property type="term" value="F:structural constituent of ribosome"/>
    <property type="evidence" value="ECO:0007669"/>
    <property type="project" value="InterPro"/>
</dbReference>
<dbReference type="GO" id="GO:0000027">
    <property type="term" value="P:ribosomal large subunit assembly"/>
    <property type="evidence" value="ECO:0007669"/>
    <property type="project" value="UniProtKB-UniRule"/>
</dbReference>
<dbReference type="GO" id="GO:0006412">
    <property type="term" value="P:translation"/>
    <property type="evidence" value="ECO:0007669"/>
    <property type="project" value="InterPro"/>
</dbReference>
<dbReference type="CDD" id="cd07026">
    <property type="entry name" value="Ribosomal_L20"/>
    <property type="match status" value="1"/>
</dbReference>
<dbReference type="FunFam" id="1.10.1900.20:FF:000001">
    <property type="entry name" value="50S ribosomal protein L20"/>
    <property type="match status" value="1"/>
</dbReference>
<dbReference type="Gene3D" id="6.10.160.10">
    <property type="match status" value="1"/>
</dbReference>
<dbReference type="Gene3D" id="1.10.1900.20">
    <property type="entry name" value="Ribosomal protein L20"/>
    <property type="match status" value="1"/>
</dbReference>
<dbReference type="HAMAP" id="MF_00382">
    <property type="entry name" value="Ribosomal_bL20"/>
    <property type="match status" value="1"/>
</dbReference>
<dbReference type="InterPro" id="IPR005813">
    <property type="entry name" value="Ribosomal_bL20"/>
</dbReference>
<dbReference type="InterPro" id="IPR049946">
    <property type="entry name" value="RIBOSOMAL_L20_CS"/>
</dbReference>
<dbReference type="InterPro" id="IPR035566">
    <property type="entry name" value="Ribosomal_protein_bL20_C"/>
</dbReference>
<dbReference type="NCBIfam" id="TIGR01032">
    <property type="entry name" value="rplT_bact"/>
    <property type="match status" value="1"/>
</dbReference>
<dbReference type="PANTHER" id="PTHR10986">
    <property type="entry name" value="39S RIBOSOMAL PROTEIN L20"/>
    <property type="match status" value="1"/>
</dbReference>
<dbReference type="Pfam" id="PF00453">
    <property type="entry name" value="Ribosomal_L20"/>
    <property type="match status" value="1"/>
</dbReference>
<dbReference type="PRINTS" id="PR00062">
    <property type="entry name" value="RIBOSOMALL20"/>
</dbReference>
<dbReference type="SUPFAM" id="SSF74731">
    <property type="entry name" value="Ribosomal protein L20"/>
    <property type="match status" value="1"/>
</dbReference>
<dbReference type="PROSITE" id="PS00937">
    <property type="entry name" value="RIBOSOMAL_L20"/>
    <property type="match status" value="1"/>
</dbReference>
<proteinExistence type="inferred from homology"/>
<protein>
    <recommendedName>
        <fullName evidence="1">Large ribosomal subunit protein bL20</fullName>
    </recommendedName>
    <alternativeName>
        <fullName evidence="2">50S ribosomal protein L20</fullName>
    </alternativeName>
</protein>
<feature type="chain" id="PRO_1000060688" description="Large ribosomal subunit protein bL20">
    <location>
        <begin position="1"/>
        <end position="118"/>
    </location>
</feature>
<accession>A8A0Q9</accession>
<reference key="1">
    <citation type="journal article" date="2008" name="J. Bacteriol.">
        <title>The pangenome structure of Escherichia coli: comparative genomic analysis of E. coli commensal and pathogenic isolates.</title>
        <authorList>
            <person name="Rasko D.A."/>
            <person name="Rosovitz M.J."/>
            <person name="Myers G.S.A."/>
            <person name="Mongodin E.F."/>
            <person name="Fricke W.F."/>
            <person name="Gajer P."/>
            <person name="Crabtree J."/>
            <person name="Sebaihia M."/>
            <person name="Thomson N.R."/>
            <person name="Chaudhuri R."/>
            <person name="Henderson I.R."/>
            <person name="Sperandio V."/>
            <person name="Ravel J."/>
        </authorList>
    </citation>
    <scope>NUCLEOTIDE SEQUENCE [LARGE SCALE GENOMIC DNA]</scope>
    <source>
        <strain>HS</strain>
    </source>
</reference>
<keyword id="KW-0687">Ribonucleoprotein</keyword>
<keyword id="KW-0689">Ribosomal protein</keyword>
<keyword id="KW-0694">RNA-binding</keyword>
<keyword id="KW-0699">rRNA-binding</keyword>
<organism>
    <name type="scientific">Escherichia coli O9:H4 (strain HS)</name>
    <dbReference type="NCBI Taxonomy" id="331112"/>
    <lineage>
        <taxon>Bacteria</taxon>
        <taxon>Pseudomonadati</taxon>
        <taxon>Pseudomonadota</taxon>
        <taxon>Gammaproteobacteria</taxon>
        <taxon>Enterobacterales</taxon>
        <taxon>Enterobacteriaceae</taxon>
        <taxon>Escherichia</taxon>
    </lineage>
</organism>
<sequence>MARVKRGVIARARHKKILKQAKGYYGARSRVYRVAFQAVIKAGQYAYRDRRQRKRQFRQLWIARINAAARQNGISYSKFINGLKKASVEIDRKILADIAVFDKVAFTALVEKAKAALA</sequence>
<name>RL20_ECOHS</name>
<gene>
    <name evidence="1" type="primary">rplT</name>
    <name type="ordered locus">EcHS_A1797</name>
</gene>